<feature type="chain" id="PRO_0000152273" description="Sugar fermentation stimulation protein homolog">
    <location>
        <begin position="1"/>
        <end position="243"/>
    </location>
</feature>
<accession>P61662</accession>
<name>SFSA_BDEBA</name>
<sequence length="243" mass="27525">MKFHSKLQEGIFLKRYKRFFADIEFQGQQVTAHVPNTGSLKSVNNPGQHCLFSESTNPERKLKYTLEMIKSPTGSWVGVNTATPNTVVRETLHHVVGHKKEVIGGFAHWAAFDEVKPEYKISAETRLDFALKKNNSDKMHFIEVKNVTLAEEGTAKFPDAVTERGQKHLRELMALMEQGHTAEIVFTIQRHDCGSFSPADDIDPEYGRLLREAYQKGLRVSPFVLDLTPESVELSETVLPLKM</sequence>
<keyword id="KW-1185">Reference proteome</keyword>
<comment type="similarity">
    <text evidence="1">Belongs to the SfsA family.</text>
</comment>
<proteinExistence type="inferred from homology"/>
<reference key="1">
    <citation type="journal article" date="2004" name="Science">
        <title>A predator unmasked: life cycle of Bdellovibrio bacteriovorus from a genomic perspective.</title>
        <authorList>
            <person name="Rendulic S."/>
            <person name="Jagtap P."/>
            <person name="Rosinus A."/>
            <person name="Eppinger M."/>
            <person name="Baar C."/>
            <person name="Lanz C."/>
            <person name="Keller H."/>
            <person name="Lambert C."/>
            <person name="Evans K.J."/>
            <person name="Goesmann A."/>
            <person name="Meyer F."/>
            <person name="Sockett R.E."/>
            <person name="Schuster S.C."/>
        </authorList>
    </citation>
    <scope>NUCLEOTIDE SEQUENCE [LARGE SCALE GENOMIC DNA]</scope>
    <source>
        <strain>ATCC 15356 / DSM 50701 / NCIMB 9529 / HD100</strain>
    </source>
</reference>
<protein>
    <recommendedName>
        <fullName evidence="1">Sugar fermentation stimulation protein homolog</fullName>
    </recommendedName>
</protein>
<dbReference type="EMBL" id="BX842648">
    <property type="protein sequence ID" value="CAE78733.1"/>
    <property type="molecule type" value="Genomic_DNA"/>
</dbReference>
<dbReference type="RefSeq" id="WP_011163335.1">
    <property type="nucleotide sequence ID" value="NC_005363.1"/>
</dbReference>
<dbReference type="SMR" id="P61662"/>
<dbReference type="STRING" id="264462.Bd0781"/>
<dbReference type="GeneID" id="93011860"/>
<dbReference type="KEGG" id="bba:Bd0781"/>
<dbReference type="eggNOG" id="COG1489">
    <property type="taxonomic scope" value="Bacteria"/>
</dbReference>
<dbReference type="HOGENOM" id="CLU_052299_2_0_7"/>
<dbReference type="Proteomes" id="UP000008080">
    <property type="component" value="Chromosome"/>
</dbReference>
<dbReference type="GO" id="GO:0003677">
    <property type="term" value="F:DNA binding"/>
    <property type="evidence" value="ECO:0007669"/>
    <property type="project" value="InterPro"/>
</dbReference>
<dbReference type="CDD" id="cd22359">
    <property type="entry name" value="SfsA-like_bacterial"/>
    <property type="match status" value="1"/>
</dbReference>
<dbReference type="Gene3D" id="2.40.50.580">
    <property type="match status" value="1"/>
</dbReference>
<dbReference type="Gene3D" id="3.40.1350.60">
    <property type="match status" value="1"/>
</dbReference>
<dbReference type="HAMAP" id="MF_00095">
    <property type="entry name" value="SfsA"/>
    <property type="match status" value="1"/>
</dbReference>
<dbReference type="InterPro" id="IPR005224">
    <property type="entry name" value="SfsA"/>
</dbReference>
<dbReference type="InterPro" id="IPR040452">
    <property type="entry name" value="SfsA_C"/>
</dbReference>
<dbReference type="InterPro" id="IPR041465">
    <property type="entry name" value="SfsA_N"/>
</dbReference>
<dbReference type="NCBIfam" id="TIGR00230">
    <property type="entry name" value="sfsA"/>
    <property type="match status" value="1"/>
</dbReference>
<dbReference type="PANTHER" id="PTHR30545">
    <property type="entry name" value="SUGAR FERMENTATION STIMULATION PROTEIN A"/>
    <property type="match status" value="1"/>
</dbReference>
<dbReference type="PANTHER" id="PTHR30545:SF2">
    <property type="entry name" value="SUGAR FERMENTATION STIMULATION PROTEIN A"/>
    <property type="match status" value="1"/>
</dbReference>
<dbReference type="Pfam" id="PF03749">
    <property type="entry name" value="SfsA"/>
    <property type="match status" value="1"/>
</dbReference>
<dbReference type="Pfam" id="PF17746">
    <property type="entry name" value="SfsA_N"/>
    <property type="match status" value="1"/>
</dbReference>
<organism>
    <name type="scientific">Bdellovibrio bacteriovorus (strain ATCC 15356 / DSM 50701 / NCIMB 9529 / HD100)</name>
    <dbReference type="NCBI Taxonomy" id="264462"/>
    <lineage>
        <taxon>Bacteria</taxon>
        <taxon>Pseudomonadati</taxon>
        <taxon>Bdellovibrionota</taxon>
        <taxon>Bdellovibrionia</taxon>
        <taxon>Bdellovibrionales</taxon>
        <taxon>Pseudobdellovibrionaceae</taxon>
        <taxon>Bdellovibrio</taxon>
    </lineage>
</organism>
<evidence type="ECO:0000255" key="1">
    <source>
        <dbReference type="HAMAP-Rule" id="MF_00095"/>
    </source>
</evidence>
<gene>
    <name evidence="1" type="primary">sfsA</name>
    <name type="ordered locus">Bd0781</name>
</gene>